<feature type="chain" id="PRO_0000157666" description="Large ribosomal subunit protein P2">
    <location>
        <begin position="1"/>
        <end position="121"/>
    </location>
</feature>
<feature type="region of interest" description="Disordered" evidence="2">
    <location>
        <begin position="72"/>
        <end position="121"/>
    </location>
</feature>
<feature type="compositionally biased region" description="Low complexity" evidence="2">
    <location>
        <begin position="72"/>
        <end position="99"/>
    </location>
</feature>
<sequence>MRYLAAYLLAQLGGTGRPQESDIKNILSSVGVECEQERAKLGVDQLHGKNVRDLINTGKEKMSAVSFGATPVAVPSGGAPAAATAAAEAPKGGDKAAAPPKEEKKEESEESDADMGFSPFD</sequence>
<evidence type="ECO:0000250" key="1"/>
<evidence type="ECO:0000256" key="2">
    <source>
        <dbReference type="SAM" id="MobiDB-lite"/>
    </source>
</evidence>
<evidence type="ECO:0000305" key="3"/>
<proteinExistence type="evidence at transcript level"/>
<comment type="function">
    <text evidence="1">Plays an important role in the elongation step of protein synthesis.</text>
</comment>
<comment type="subunit">
    <text evidence="1">P1 and P2 exist as dimers at the large ribosomal subunit.</text>
</comment>
<comment type="PTM">
    <text evidence="1">Phosphorylated.</text>
</comment>
<comment type="similarity">
    <text evidence="3">Belongs to the eukaryotic ribosomal protein P1/P2 family.</text>
</comment>
<name>RLA2_TAESO</name>
<reference key="1">
    <citation type="journal article" date="1996" name="Biochem. Biophys. Res. Commun.">
        <title>Cloning and characterization of a ribosomal P protein from Taenia solium, the aetiological agent of human cysticercosis.</title>
        <authorList>
            <person name="Kalinna B.H."/>
            <person name="McManus D.P."/>
        </authorList>
    </citation>
    <scope>NUCLEOTIDE SEQUENCE [MRNA]</scope>
</reference>
<keyword id="KW-0597">Phosphoprotein</keyword>
<keyword id="KW-0687">Ribonucleoprotein</keyword>
<keyword id="KW-0689">Ribosomal protein</keyword>
<protein>
    <recommendedName>
        <fullName evidence="3">Large ribosomal subunit protein P2</fullName>
    </recommendedName>
    <alternativeName>
        <fullName>60S acidic ribosomal protein P2</fullName>
    </alternativeName>
</protein>
<accession>P50879</accession>
<dbReference type="EMBL" id="L39653">
    <property type="protein sequence ID" value="AAB03732.1"/>
    <property type="molecule type" value="mRNA"/>
</dbReference>
<dbReference type="PIR" id="JC4622">
    <property type="entry name" value="JC4622"/>
</dbReference>
<dbReference type="SMR" id="P50879"/>
<dbReference type="GO" id="GO:0022625">
    <property type="term" value="C:cytosolic large ribosomal subunit"/>
    <property type="evidence" value="ECO:0007669"/>
    <property type="project" value="InterPro"/>
</dbReference>
<dbReference type="GO" id="GO:0003735">
    <property type="term" value="F:structural constituent of ribosome"/>
    <property type="evidence" value="ECO:0007669"/>
    <property type="project" value="InterPro"/>
</dbReference>
<dbReference type="GO" id="GO:0002182">
    <property type="term" value="P:cytoplasmic translational elongation"/>
    <property type="evidence" value="ECO:0007669"/>
    <property type="project" value="InterPro"/>
</dbReference>
<dbReference type="CDD" id="cd05833">
    <property type="entry name" value="Ribosomal_P2"/>
    <property type="match status" value="1"/>
</dbReference>
<dbReference type="FunFam" id="1.10.10.1410:FF:000002">
    <property type="entry name" value="60S acidic ribosomal protein P2"/>
    <property type="match status" value="1"/>
</dbReference>
<dbReference type="Gene3D" id="1.10.10.1410">
    <property type="match status" value="1"/>
</dbReference>
<dbReference type="HAMAP" id="MF_01478">
    <property type="entry name" value="Ribosomal_L12_arch"/>
    <property type="match status" value="1"/>
</dbReference>
<dbReference type="InterPro" id="IPR038716">
    <property type="entry name" value="P1/P2_N_sf"/>
</dbReference>
<dbReference type="InterPro" id="IPR027534">
    <property type="entry name" value="Ribosomal_P1/P2"/>
</dbReference>
<dbReference type="InterPro" id="IPR044076">
    <property type="entry name" value="Ribosomal_P2"/>
</dbReference>
<dbReference type="PANTHER" id="PTHR21141">
    <property type="entry name" value="60S ACIDIC RIBOSOMAL PROTEIN FAMILY MEMBER"/>
    <property type="match status" value="1"/>
</dbReference>
<dbReference type="PANTHER" id="PTHR21141:SF5">
    <property type="entry name" value="LARGE RIBOSOMAL SUBUNIT PROTEIN P2"/>
    <property type="match status" value="1"/>
</dbReference>
<dbReference type="Pfam" id="PF00428">
    <property type="entry name" value="Ribosomal_60s"/>
    <property type="match status" value="1"/>
</dbReference>
<organism>
    <name type="scientific">Taenia solium</name>
    <name type="common">Pork tapeworm</name>
    <dbReference type="NCBI Taxonomy" id="6204"/>
    <lineage>
        <taxon>Eukaryota</taxon>
        <taxon>Metazoa</taxon>
        <taxon>Spiralia</taxon>
        <taxon>Lophotrochozoa</taxon>
        <taxon>Platyhelminthes</taxon>
        <taxon>Cestoda</taxon>
        <taxon>Eucestoda</taxon>
        <taxon>Cyclophyllidea</taxon>
        <taxon>Taeniidae</taxon>
        <taxon>Taenia</taxon>
    </lineage>
</organism>